<sequence>MSIYFISDIHGCYKEFKLLLKKSFFNDKKDFLWIAGDLVSRGPDSLKVIRYLYSLRKRIKIILGNHDLNLIAVYSGVKENKKENYFDEFLSAKDNLQLINWLRCQSILKIDEERKIIMSHAGISPKWDIDTAKKYALEIEKCLSGKNYSSFLRSVFNNKINYWNLNLNKLDRLRYSINVFTRMRYCYPDSRLNLICKKSPNLVKYPLIPWFKIPNKIPKEYSVFFGHWSSLIGTKVPQPFFPLDSGCCWGGKLTMFRWEDKKYFFQSFQKNNS</sequence>
<gene>
    <name type="primary">apaH</name>
    <name type="ordered locus">BUsg_135</name>
</gene>
<accession>Q8K9Z9</accession>
<reference key="1">
    <citation type="journal article" date="2002" name="Science">
        <title>50 million years of genomic stasis in endosymbiotic bacteria.</title>
        <authorList>
            <person name="Tamas I."/>
            <person name="Klasson L."/>
            <person name="Canbaeck B."/>
            <person name="Naeslund A.K."/>
            <person name="Eriksson A.-S."/>
            <person name="Wernegreen J.J."/>
            <person name="Sandstroem J.P."/>
            <person name="Moran N.A."/>
            <person name="Andersson S.G.E."/>
        </authorList>
    </citation>
    <scope>NUCLEOTIDE SEQUENCE [LARGE SCALE GENOMIC DNA]</scope>
    <source>
        <strain>Sg</strain>
    </source>
</reference>
<keyword id="KW-0378">Hydrolase</keyword>
<feature type="chain" id="PRO_0000197982" description="Bis(5'-nucleosyl)-tetraphosphatase, symmetrical">
    <location>
        <begin position="1"/>
        <end position="273"/>
    </location>
</feature>
<organism>
    <name type="scientific">Buchnera aphidicola subsp. Schizaphis graminum (strain Sg)</name>
    <dbReference type="NCBI Taxonomy" id="198804"/>
    <lineage>
        <taxon>Bacteria</taxon>
        <taxon>Pseudomonadati</taxon>
        <taxon>Pseudomonadota</taxon>
        <taxon>Gammaproteobacteria</taxon>
        <taxon>Enterobacterales</taxon>
        <taxon>Erwiniaceae</taxon>
        <taxon>Buchnera</taxon>
    </lineage>
</organism>
<evidence type="ECO:0000250" key="1"/>
<evidence type="ECO:0000305" key="2"/>
<comment type="function">
    <text evidence="1">Hydrolyzes diadenosine 5',5'''-P1,P4-tetraphosphate to yield ADP.</text>
</comment>
<comment type="catalytic activity">
    <reaction>
        <text>P(1),P(4)-bis(5'-adenosyl) tetraphosphate + H2O = 2 ADP + 2 H(+)</text>
        <dbReference type="Rhea" id="RHEA:24252"/>
        <dbReference type="ChEBI" id="CHEBI:15377"/>
        <dbReference type="ChEBI" id="CHEBI:15378"/>
        <dbReference type="ChEBI" id="CHEBI:58141"/>
        <dbReference type="ChEBI" id="CHEBI:456216"/>
        <dbReference type="EC" id="3.6.1.41"/>
    </reaction>
</comment>
<comment type="similarity">
    <text evidence="2">Belongs to the Ap4A hydrolase family.</text>
</comment>
<protein>
    <recommendedName>
        <fullName>Bis(5'-nucleosyl)-tetraphosphatase, symmetrical</fullName>
        <ecNumber>3.6.1.41</ecNumber>
    </recommendedName>
    <alternativeName>
        <fullName>Ap4A hydrolase</fullName>
    </alternativeName>
    <alternativeName>
        <fullName>Diadenosine 5',5'''-P1,P4-tetraphosphate pyrophosphohydrolase</fullName>
    </alternativeName>
    <alternativeName>
        <fullName>Diadenosine tetraphosphatase</fullName>
    </alternativeName>
</protein>
<name>APAH_BUCAP</name>
<dbReference type="EC" id="3.6.1.41"/>
<dbReference type="EMBL" id="AE013218">
    <property type="protein sequence ID" value="AAM67703.1"/>
    <property type="molecule type" value="Genomic_DNA"/>
</dbReference>
<dbReference type="RefSeq" id="WP_011053670.1">
    <property type="nucleotide sequence ID" value="NC_004061.1"/>
</dbReference>
<dbReference type="SMR" id="Q8K9Z9"/>
<dbReference type="STRING" id="198804.BUsg_135"/>
<dbReference type="GeneID" id="93003605"/>
<dbReference type="KEGG" id="bas:BUsg_135"/>
<dbReference type="eggNOG" id="COG0639">
    <property type="taxonomic scope" value="Bacteria"/>
</dbReference>
<dbReference type="HOGENOM" id="CLU_056184_2_0_6"/>
<dbReference type="Proteomes" id="UP000000416">
    <property type="component" value="Chromosome"/>
</dbReference>
<dbReference type="GO" id="GO:0008803">
    <property type="term" value="F:bis(5'-nucleosyl)-tetraphosphatase (symmetrical) activity"/>
    <property type="evidence" value="ECO:0007669"/>
    <property type="project" value="UniProtKB-UniRule"/>
</dbReference>
<dbReference type="CDD" id="cd07422">
    <property type="entry name" value="MPP_ApaH"/>
    <property type="match status" value="1"/>
</dbReference>
<dbReference type="Gene3D" id="3.60.21.10">
    <property type="match status" value="1"/>
</dbReference>
<dbReference type="HAMAP" id="MF_00199">
    <property type="entry name" value="ApaH"/>
    <property type="match status" value="1"/>
</dbReference>
<dbReference type="InterPro" id="IPR004617">
    <property type="entry name" value="ApaH"/>
</dbReference>
<dbReference type="InterPro" id="IPR004843">
    <property type="entry name" value="Calcineurin-like_PHP_ApaH"/>
</dbReference>
<dbReference type="InterPro" id="IPR029052">
    <property type="entry name" value="Metallo-depent_PP-like"/>
</dbReference>
<dbReference type="NCBIfam" id="TIGR00668">
    <property type="entry name" value="apaH"/>
    <property type="match status" value="1"/>
</dbReference>
<dbReference type="NCBIfam" id="NF001204">
    <property type="entry name" value="PRK00166.1"/>
    <property type="match status" value="1"/>
</dbReference>
<dbReference type="PANTHER" id="PTHR40942">
    <property type="match status" value="1"/>
</dbReference>
<dbReference type="PANTHER" id="PTHR40942:SF2">
    <property type="entry name" value="CYTOCHROME-RELATED"/>
    <property type="match status" value="1"/>
</dbReference>
<dbReference type="Pfam" id="PF00149">
    <property type="entry name" value="Metallophos"/>
    <property type="match status" value="1"/>
</dbReference>
<dbReference type="PIRSF" id="PIRSF000903">
    <property type="entry name" value="B5n-ttraPtase_sm"/>
    <property type="match status" value="1"/>
</dbReference>
<dbReference type="SUPFAM" id="SSF56300">
    <property type="entry name" value="Metallo-dependent phosphatases"/>
    <property type="match status" value="1"/>
</dbReference>
<proteinExistence type="inferred from homology"/>